<protein>
    <recommendedName>
        <fullName>Calcium-transporting ATPase 2</fullName>
        <ecNumber>7.2.2.10</ecNumber>
    </recommendedName>
</protein>
<comment type="function">
    <text evidence="4">This magnesium-dependent enzyme catalyzes the hydrolysis of ATP coupled with the transport of calcium. Transports the calcium to the vacuole and participates in the control of the cytosolic free calcium.</text>
</comment>
<comment type="catalytic activity">
    <reaction>
        <text>Ca(2+)(in) + ATP + H2O = Ca(2+)(out) + ADP + phosphate + H(+)</text>
        <dbReference type="Rhea" id="RHEA:18105"/>
        <dbReference type="ChEBI" id="CHEBI:15377"/>
        <dbReference type="ChEBI" id="CHEBI:15378"/>
        <dbReference type="ChEBI" id="CHEBI:29108"/>
        <dbReference type="ChEBI" id="CHEBI:30616"/>
        <dbReference type="ChEBI" id="CHEBI:43474"/>
        <dbReference type="ChEBI" id="CHEBI:456216"/>
        <dbReference type="EC" id="7.2.2.10"/>
    </reaction>
</comment>
<comment type="subcellular location">
    <subcellularLocation>
        <location evidence="4">Vacuole membrane</location>
        <topology evidence="4">Multi-pass membrane protein</topology>
    </subcellularLocation>
</comment>
<comment type="similarity">
    <text evidence="5">Belongs to the cation transport ATPase (P-type) (TC 3.A.3) family.</text>
</comment>
<organism>
    <name type="scientific">Schizosaccharomyces pombe (strain 972 / ATCC 24843)</name>
    <name type="common">Fission yeast</name>
    <dbReference type="NCBI Taxonomy" id="284812"/>
    <lineage>
        <taxon>Eukaryota</taxon>
        <taxon>Fungi</taxon>
        <taxon>Dikarya</taxon>
        <taxon>Ascomycota</taxon>
        <taxon>Taphrinomycotina</taxon>
        <taxon>Schizosaccharomycetes</taxon>
        <taxon>Schizosaccharomycetales</taxon>
        <taxon>Schizosaccharomycetaceae</taxon>
        <taxon>Schizosaccharomyces</taxon>
    </lineage>
</organism>
<gene>
    <name type="primary">pmc1</name>
    <name type="ORF">SPAPB2B4.04c</name>
</gene>
<dbReference type="EC" id="7.2.2.10"/>
<dbReference type="EMBL" id="CU329670">
    <property type="protein sequence ID" value="CAC21470.1"/>
    <property type="molecule type" value="Genomic_DNA"/>
</dbReference>
<dbReference type="EMBL" id="AB027950">
    <property type="protein sequence ID" value="BAA87254.1"/>
    <property type="molecule type" value="Genomic_DNA"/>
</dbReference>
<dbReference type="RefSeq" id="NP_593890.1">
    <property type="nucleotide sequence ID" value="NM_001019320.2"/>
</dbReference>
<dbReference type="SMR" id="Q9HDW7"/>
<dbReference type="BioGRID" id="279897">
    <property type="interactions" value="19"/>
</dbReference>
<dbReference type="FunCoup" id="Q9HDW7">
    <property type="interactions" value="507"/>
</dbReference>
<dbReference type="STRING" id="284812.Q9HDW7"/>
<dbReference type="TCDB" id="3.A.3.2.35">
    <property type="family name" value="the p-type atpase (p-atpase) superfamily"/>
</dbReference>
<dbReference type="iPTMnet" id="Q9HDW7"/>
<dbReference type="PaxDb" id="4896-SPAPB2B4.04c.1"/>
<dbReference type="EnsemblFungi" id="SPAPB2B4.04c.1">
    <property type="protein sequence ID" value="SPAPB2B4.04c.1:pep"/>
    <property type="gene ID" value="SPAPB2B4.04c"/>
</dbReference>
<dbReference type="GeneID" id="2543477"/>
<dbReference type="KEGG" id="spo:2543477"/>
<dbReference type="PomBase" id="SPAPB2B4.04c">
    <property type="gene designation" value="pmc1"/>
</dbReference>
<dbReference type="VEuPathDB" id="FungiDB:SPAPB2B4.04c"/>
<dbReference type="eggNOG" id="KOG0204">
    <property type="taxonomic scope" value="Eukaryota"/>
</dbReference>
<dbReference type="HOGENOM" id="CLU_002360_9_3_1"/>
<dbReference type="InParanoid" id="Q9HDW7"/>
<dbReference type="OMA" id="YRMYVKG"/>
<dbReference type="PhylomeDB" id="Q9HDW7"/>
<dbReference type="Reactome" id="R-SPO-418359">
    <property type="pathway name" value="Reduction of cytosolic Ca++ levels"/>
</dbReference>
<dbReference type="Reactome" id="R-SPO-5578775">
    <property type="pathway name" value="Ion homeostasis"/>
</dbReference>
<dbReference type="Reactome" id="R-SPO-936837">
    <property type="pathway name" value="Ion transport by P-type ATPases"/>
</dbReference>
<dbReference type="PRO" id="PR:Q9HDW7"/>
<dbReference type="Proteomes" id="UP000002485">
    <property type="component" value="Chromosome I"/>
</dbReference>
<dbReference type="GO" id="GO:0000329">
    <property type="term" value="C:fungal-type vacuole membrane"/>
    <property type="evidence" value="ECO:0000314"/>
    <property type="project" value="PomBase"/>
</dbReference>
<dbReference type="GO" id="GO:0043231">
    <property type="term" value="C:intracellular membrane-bounded organelle"/>
    <property type="evidence" value="ECO:0000318"/>
    <property type="project" value="GO_Central"/>
</dbReference>
<dbReference type="GO" id="GO:0005886">
    <property type="term" value="C:plasma membrane"/>
    <property type="evidence" value="ECO:0000318"/>
    <property type="project" value="GO_Central"/>
</dbReference>
<dbReference type="GO" id="GO:0005524">
    <property type="term" value="F:ATP binding"/>
    <property type="evidence" value="ECO:0000305"/>
    <property type="project" value="PomBase"/>
</dbReference>
<dbReference type="GO" id="GO:0016887">
    <property type="term" value="F:ATP hydrolysis activity"/>
    <property type="evidence" value="ECO:0007669"/>
    <property type="project" value="InterPro"/>
</dbReference>
<dbReference type="GO" id="GO:0005509">
    <property type="term" value="F:calcium ion binding"/>
    <property type="evidence" value="ECO:0000255"/>
    <property type="project" value="PomBase"/>
</dbReference>
<dbReference type="GO" id="GO:0005388">
    <property type="term" value="F:P-type calcium transporter activity"/>
    <property type="evidence" value="ECO:0000318"/>
    <property type="project" value="GO_Central"/>
</dbReference>
<dbReference type="GO" id="GO:0070588">
    <property type="term" value="P:calcium ion transmembrane transport"/>
    <property type="evidence" value="ECO:0000266"/>
    <property type="project" value="PomBase"/>
</dbReference>
<dbReference type="GO" id="GO:0006874">
    <property type="term" value="P:intracellular calcium ion homeostasis"/>
    <property type="evidence" value="ECO:0000315"/>
    <property type="project" value="PomBase"/>
</dbReference>
<dbReference type="CDD" id="cd02081">
    <property type="entry name" value="P-type_ATPase_Ca_PMCA-like"/>
    <property type="match status" value="1"/>
</dbReference>
<dbReference type="FunFam" id="1.20.1110.10:FF:000039">
    <property type="entry name" value="Calcium-transporting ATPase"/>
    <property type="match status" value="1"/>
</dbReference>
<dbReference type="FunFam" id="2.70.150.10:FF:000028">
    <property type="entry name" value="Calcium-transporting ATPase"/>
    <property type="match status" value="1"/>
</dbReference>
<dbReference type="FunFam" id="3.40.50.1000:FF:000018">
    <property type="entry name" value="Calcium-transporting ATPase"/>
    <property type="match status" value="1"/>
</dbReference>
<dbReference type="FunFam" id="3.40.1110.10:FF:000154">
    <property type="entry name" value="Putative P-type ATPase"/>
    <property type="match status" value="1"/>
</dbReference>
<dbReference type="Gene3D" id="3.40.1110.10">
    <property type="entry name" value="Calcium-transporting ATPase, cytoplasmic domain N"/>
    <property type="match status" value="1"/>
</dbReference>
<dbReference type="Gene3D" id="2.70.150.10">
    <property type="entry name" value="Calcium-transporting ATPase, cytoplasmic transduction domain A"/>
    <property type="match status" value="1"/>
</dbReference>
<dbReference type="Gene3D" id="1.20.1110.10">
    <property type="entry name" value="Calcium-transporting ATPase, transmembrane domain"/>
    <property type="match status" value="1"/>
</dbReference>
<dbReference type="Gene3D" id="3.40.50.1000">
    <property type="entry name" value="HAD superfamily/HAD-like"/>
    <property type="match status" value="1"/>
</dbReference>
<dbReference type="InterPro" id="IPR006068">
    <property type="entry name" value="ATPase_P-typ_cation-transptr_C"/>
</dbReference>
<dbReference type="InterPro" id="IPR004014">
    <property type="entry name" value="ATPase_P-typ_cation-transptr_N"/>
</dbReference>
<dbReference type="InterPro" id="IPR023299">
    <property type="entry name" value="ATPase_P-typ_cyto_dom_N"/>
</dbReference>
<dbReference type="InterPro" id="IPR018303">
    <property type="entry name" value="ATPase_P-typ_P_site"/>
</dbReference>
<dbReference type="InterPro" id="IPR023298">
    <property type="entry name" value="ATPase_P-typ_TM_dom_sf"/>
</dbReference>
<dbReference type="InterPro" id="IPR008250">
    <property type="entry name" value="ATPase_P-typ_transduc_dom_A_sf"/>
</dbReference>
<dbReference type="InterPro" id="IPR036412">
    <property type="entry name" value="HAD-like_sf"/>
</dbReference>
<dbReference type="InterPro" id="IPR023214">
    <property type="entry name" value="HAD_sf"/>
</dbReference>
<dbReference type="InterPro" id="IPR006408">
    <property type="entry name" value="P-type_ATPase_IIB"/>
</dbReference>
<dbReference type="InterPro" id="IPR001757">
    <property type="entry name" value="P_typ_ATPase"/>
</dbReference>
<dbReference type="InterPro" id="IPR044492">
    <property type="entry name" value="P_typ_ATPase_HD_dom"/>
</dbReference>
<dbReference type="NCBIfam" id="TIGR01517">
    <property type="entry name" value="ATPase-IIB_Ca"/>
    <property type="match status" value="1"/>
</dbReference>
<dbReference type="NCBIfam" id="TIGR01494">
    <property type="entry name" value="ATPase_P-type"/>
    <property type="match status" value="2"/>
</dbReference>
<dbReference type="PANTHER" id="PTHR24093:SF369">
    <property type="entry name" value="CALCIUM-TRANSPORTING ATPASE"/>
    <property type="match status" value="1"/>
</dbReference>
<dbReference type="PANTHER" id="PTHR24093">
    <property type="entry name" value="CATION TRANSPORTING ATPASE"/>
    <property type="match status" value="1"/>
</dbReference>
<dbReference type="Pfam" id="PF13246">
    <property type="entry name" value="Cation_ATPase"/>
    <property type="match status" value="1"/>
</dbReference>
<dbReference type="Pfam" id="PF00689">
    <property type="entry name" value="Cation_ATPase_C"/>
    <property type="match status" value="1"/>
</dbReference>
<dbReference type="Pfam" id="PF00690">
    <property type="entry name" value="Cation_ATPase_N"/>
    <property type="match status" value="1"/>
</dbReference>
<dbReference type="Pfam" id="PF00122">
    <property type="entry name" value="E1-E2_ATPase"/>
    <property type="match status" value="1"/>
</dbReference>
<dbReference type="Pfam" id="PF00702">
    <property type="entry name" value="Hydrolase"/>
    <property type="match status" value="1"/>
</dbReference>
<dbReference type="PRINTS" id="PR00119">
    <property type="entry name" value="CATATPASE"/>
</dbReference>
<dbReference type="SFLD" id="SFLDG00002">
    <property type="entry name" value="C1.7:_P-type_atpase_like"/>
    <property type="match status" value="1"/>
</dbReference>
<dbReference type="SFLD" id="SFLDF00027">
    <property type="entry name" value="p-type_atpase"/>
    <property type="match status" value="1"/>
</dbReference>
<dbReference type="SMART" id="SM00831">
    <property type="entry name" value="Cation_ATPase_N"/>
    <property type="match status" value="1"/>
</dbReference>
<dbReference type="SUPFAM" id="SSF81653">
    <property type="entry name" value="Calcium ATPase, transduction domain A"/>
    <property type="match status" value="1"/>
</dbReference>
<dbReference type="SUPFAM" id="SSF81665">
    <property type="entry name" value="Calcium ATPase, transmembrane domain M"/>
    <property type="match status" value="1"/>
</dbReference>
<dbReference type="SUPFAM" id="SSF56784">
    <property type="entry name" value="HAD-like"/>
    <property type="match status" value="1"/>
</dbReference>
<dbReference type="SUPFAM" id="SSF81660">
    <property type="entry name" value="Metal cation-transporting ATPase, ATP-binding domain N"/>
    <property type="match status" value="1"/>
</dbReference>
<dbReference type="PROSITE" id="PS00154">
    <property type="entry name" value="ATPASE_E1_E2"/>
    <property type="match status" value="1"/>
</dbReference>
<reference key="1">
    <citation type="journal article" date="2002" name="Nature">
        <title>The genome sequence of Schizosaccharomyces pombe.</title>
        <authorList>
            <person name="Wood V."/>
            <person name="Gwilliam R."/>
            <person name="Rajandream M.A."/>
            <person name="Lyne M.H."/>
            <person name="Lyne R."/>
            <person name="Stewart A."/>
            <person name="Sgouros J.G."/>
            <person name="Peat N."/>
            <person name="Hayles J."/>
            <person name="Baker S.G."/>
            <person name="Basham D."/>
            <person name="Bowman S."/>
            <person name="Brooks K."/>
            <person name="Brown D."/>
            <person name="Brown S."/>
            <person name="Chillingworth T."/>
            <person name="Churcher C.M."/>
            <person name="Collins M."/>
            <person name="Connor R."/>
            <person name="Cronin A."/>
            <person name="Davis P."/>
            <person name="Feltwell T."/>
            <person name="Fraser A."/>
            <person name="Gentles S."/>
            <person name="Goble A."/>
            <person name="Hamlin N."/>
            <person name="Harris D.E."/>
            <person name="Hidalgo J."/>
            <person name="Hodgson G."/>
            <person name="Holroyd S."/>
            <person name="Hornsby T."/>
            <person name="Howarth S."/>
            <person name="Huckle E.J."/>
            <person name="Hunt S."/>
            <person name="Jagels K."/>
            <person name="James K.D."/>
            <person name="Jones L."/>
            <person name="Jones M."/>
            <person name="Leather S."/>
            <person name="McDonald S."/>
            <person name="McLean J."/>
            <person name="Mooney P."/>
            <person name="Moule S."/>
            <person name="Mungall K.L."/>
            <person name="Murphy L.D."/>
            <person name="Niblett D."/>
            <person name="Odell C."/>
            <person name="Oliver K."/>
            <person name="O'Neil S."/>
            <person name="Pearson D."/>
            <person name="Quail M.A."/>
            <person name="Rabbinowitsch E."/>
            <person name="Rutherford K.M."/>
            <person name="Rutter S."/>
            <person name="Saunders D."/>
            <person name="Seeger K."/>
            <person name="Sharp S."/>
            <person name="Skelton J."/>
            <person name="Simmonds M.N."/>
            <person name="Squares R."/>
            <person name="Squares S."/>
            <person name="Stevens K."/>
            <person name="Taylor K."/>
            <person name="Taylor R.G."/>
            <person name="Tivey A."/>
            <person name="Walsh S.V."/>
            <person name="Warren T."/>
            <person name="Whitehead S."/>
            <person name="Woodward J.R."/>
            <person name="Volckaert G."/>
            <person name="Aert R."/>
            <person name="Robben J."/>
            <person name="Grymonprez B."/>
            <person name="Weltjens I."/>
            <person name="Vanstreels E."/>
            <person name="Rieger M."/>
            <person name="Schaefer M."/>
            <person name="Mueller-Auer S."/>
            <person name="Gabel C."/>
            <person name="Fuchs M."/>
            <person name="Duesterhoeft A."/>
            <person name="Fritzc C."/>
            <person name="Holzer E."/>
            <person name="Moestl D."/>
            <person name="Hilbert H."/>
            <person name="Borzym K."/>
            <person name="Langer I."/>
            <person name="Beck A."/>
            <person name="Lehrach H."/>
            <person name="Reinhardt R."/>
            <person name="Pohl T.M."/>
            <person name="Eger P."/>
            <person name="Zimmermann W."/>
            <person name="Wedler H."/>
            <person name="Wambutt R."/>
            <person name="Purnelle B."/>
            <person name="Goffeau A."/>
            <person name="Cadieu E."/>
            <person name="Dreano S."/>
            <person name="Gloux S."/>
            <person name="Lelaure V."/>
            <person name="Mottier S."/>
            <person name="Galibert F."/>
            <person name="Aves S.J."/>
            <person name="Xiang Z."/>
            <person name="Hunt C."/>
            <person name="Moore K."/>
            <person name="Hurst S.M."/>
            <person name="Lucas M."/>
            <person name="Rochet M."/>
            <person name="Gaillardin C."/>
            <person name="Tallada V.A."/>
            <person name="Garzon A."/>
            <person name="Thode G."/>
            <person name="Daga R.R."/>
            <person name="Cruzado L."/>
            <person name="Jimenez J."/>
            <person name="Sanchez M."/>
            <person name="del Rey F."/>
            <person name="Benito J."/>
            <person name="Dominguez A."/>
            <person name="Revuelta J.L."/>
            <person name="Moreno S."/>
            <person name="Armstrong J."/>
            <person name="Forsburg S.L."/>
            <person name="Cerutti L."/>
            <person name="Lowe T."/>
            <person name="McCombie W.R."/>
            <person name="Paulsen I."/>
            <person name="Potashkin J."/>
            <person name="Shpakovski G.V."/>
            <person name="Ussery D."/>
            <person name="Barrell B.G."/>
            <person name="Nurse P."/>
        </authorList>
    </citation>
    <scope>NUCLEOTIDE SEQUENCE [LARGE SCALE GENOMIC DNA]</scope>
    <source>
        <strain>972 / ATCC 24843</strain>
    </source>
</reference>
<reference key="2">
    <citation type="journal article" date="2000" name="Genes Cells">
        <title>Large-scale screening of intracellular protein localization in living fission yeast cells by the use of a GFP-fusion genomic DNA library.</title>
        <authorList>
            <person name="Ding D.-Q."/>
            <person name="Tomita Y."/>
            <person name="Yamamoto A."/>
            <person name="Chikashige Y."/>
            <person name="Haraguchi T."/>
            <person name="Hiraoka Y."/>
        </authorList>
    </citation>
    <scope>NUCLEOTIDE SEQUENCE [LARGE SCALE GENOMIC DNA] OF 161-331</scope>
    <source>
        <strain>ATCC 38364 / 968</strain>
    </source>
</reference>
<reference key="3">
    <citation type="journal article" date="2003" name="Curr. Genet.">
        <title>An inventory of the P-type ATPases in the fission yeast Schizosaccharomyces pombe.</title>
        <authorList>
            <person name="Okorokova-Facanha A.L."/>
            <person name="Okorokov L.A."/>
            <person name="Ekwall K."/>
        </authorList>
    </citation>
    <scope>IDENTIFICATION</scope>
</reference>
<reference key="4">
    <citation type="journal article" date="2004" name="Eukaryot. Cell">
        <title>Schizosaccharomyces pombe Pmr1p is essential for cell wall integrity and is required for polarized cell growth and cytokinesis.</title>
        <authorList>
            <person name="Cortes J.C.G."/>
            <person name="Katoh-Fukui R."/>
            <person name="Moto K."/>
            <person name="Ribas J.C."/>
            <person name="Ishiguro J."/>
        </authorList>
    </citation>
    <scope>FUNCTION</scope>
    <scope>SUBCELLULAR LOCATION</scope>
</reference>
<evidence type="ECO:0000250" key="1">
    <source>
        <dbReference type="UniProtKB" id="P04191"/>
    </source>
</evidence>
<evidence type="ECO:0000255" key="2"/>
<evidence type="ECO:0000256" key="3">
    <source>
        <dbReference type="SAM" id="MobiDB-lite"/>
    </source>
</evidence>
<evidence type="ECO:0000269" key="4">
    <source>
    </source>
</evidence>
<evidence type="ECO:0000305" key="5"/>
<name>ATC2_SCHPO</name>
<feature type="chain" id="PRO_0000362141" description="Calcium-transporting ATPase 2">
    <location>
        <begin position="1"/>
        <end position="1292"/>
    </location>
</feature>
<feature type="topological domain" description="Cytoplasmic" evidence="2">
    <location>
        <begin position="1"/>
        <end position="236"/>
    </location>
</feature>
<feature type="transmembrane region" description="Helical" evidence="2">
    <location>
        <begin position="237"/>
        <end position="257"/>
    </location>
</feature>
<feature type="topological domain" description="Vacuolar" evidence="5">
    <location>
        <begin position="258"/>
        <end position="273"/>
    </location>
</feature>
<feature type="transmembrane region" description="Helical" evidence="2">
    <location>
        <begin position="274"/>
        <end position="294"/>
    </location>
</feature>
<feature type="topological domain" description="Cytoplasmic" evidence="2">
    <location>
        <begin position="295"/>
        <end position="448"/>
    </location>
</feature>
<feature type="transmembrane region" description="Helical" evidence="2">
    <location>
        <begin position="449"/>
        <end position="469"/>
    </location>
</feature>
<feature type="topological domain" description="Vacuolar" evidence="5">
    <location>
        <begin position="470"/>
        <end position="488"/>
    </location>
</feature>
<feature type="transmembrane region" description="Helical" evidence="2">
    <location>
        <begin position="489"/>
        <end position="509"/>
    </location>
</feature>
<feature type="topological domain" description="Cytoplasmic" evidence="2">
    <location>
        <begin position="510"/>
        <end position="938"/>
    </location>
</feature>
<feature type="transmembrane region" description="Helical" evidence="2">
    <location>
        <begin position="939"/>
        <end position="959"/>
    </location>
</feature>
<feature type="topological domain" description="Vacuolar" evidence="5">
    <location>
        <begin position="960"/>
        <end position="966"/>
    </location>
</feature>
<feature type="transmembrane region" description="Helical" evidence="2">
    <location>
        <begin position="967"/>
        <end position="987"/>
    </location>
</feature>
<feature type="topological domain" description="Cytoplasmic" evidence="2">
    <location>
        <begin position="988"/>
        <end position="1016"/>
    </location>
</feature>
<feature type="transmembrane region" description="Helical" evidence="2">
    <location>
        <begin position="1017"/>
        <end position="1037"/>
    </location>
</feature>
<feature type="topological domain" description="Vacuolar" evidence="5">
    <location>
        <begin position="1038"/>
        <end position="1084"/>
    </location>
</feature>
<feature type="transmembrane region" description="Helical" evidence="2">
    <location>
        <begin position="1085"/>
        <end position="1105"/>
    </location>
</feature>
<feature type="topological domain" description="Cytoplasmic" evidence="2">
    <location>
        <begin position="1106"/>
        <end position="1115"/>
    </location>
</feature>
<feature type="transmembrane region" description="Helical" evidence="2">
    <location>
        <begin position="1116"/>
        <end position="1136"/>
    </location>
</feature>
<feature type="topological domain" description="Vacuolar" evidence="5">
    <location>
        <begin position="1137"/>
        <end position="1292"/>
    </location>
</feature>
<feature type="region of interest" description="Disordered" evidence="3">
    <location>
        <begin position="1"/>
        <end position="105"/>
    </location>
</feature>
<feature type="compositionally biased region" description="Polar residues" evidence="3">
    <location>
        <begin position="23"/>
        <end position="41"/>
    </location>
</feature>
<feature type="compositionally biased region" description="Low complexity" evidence="3">
    <location>
        <begin position="44"/>
        <end position="60"/>
    </location>
</feature>
<feature type="compositionally biased region" description="Basic and acidic residues" evidence="3">
    <location>
        <begin position="68"/>
        <end position="78"/>
    </location>
</feature>
<feature type="active site" description="4-aspartylphosphate intermediate" evidence="1">
    <location>
        <position position="545"/>
    </location>
</feature>
<feature type="binding site" evidence="1">
    <location>
        <position position="498"/>
    </location>
    <ligand>
        <name>Ca(2+)</name>
        <dbReference type="ChEBI" id="CHEBI:29108"/>
        <label>1</label>
    </ligand>
</feature>
<feature type="binding site" evidence="1">
    <location>
        <position position="503"/>
    </location>
    <ligand>
        <name>Ca(2+)</name>
        <dbReference type="ChEBI" id="CHEBI:29108"/>
        <label>1</label>
    </ligand>
</feature>
<feature type="binding site" evidence="1">
    <location>
        <position position="545"/>
    </location>
    <ligand>
        <name>Mg(2+)</name>
        <dbReference type="ChEBI" id="CHEBI:18420"/>
    </ligand>
</feature>
<feature type="binding site" evidence="1">
    <location>
        <position position="547"/>
    </location>
    <ligand>
        <name>ATP</name>
        <dbReference type="ChEBI" id="CHEBI:30616"/>
    </ligand>
</feature>
<feature type="binding site" evidence="1">
    <location>
        <position position="547"/>
    </location>
    <ligand>
        <name>Mg(2+)</name>
        <dbReference type="ChEBI" id="CHEBI:18420"/>
    </ligand>
</feature>
<feature type="binding site" evidence="1">
    <location>
        <position position="638"/>
    </location>
    <ligand>
        <name>ATP</name>
        <dbReference type="ChEBI" id="CHEBI:30616"/>
    </ligand>
</feature>
<feature type="binding site" evidence="1">
    <location>
        <position position="691"/>
    </location>
    <ligand>
        <name>ATP</name>
        <dbReference type="ChEBI" id="CHEBI:30616"/>
    </ligand>
</feature>
<feature type="binding site" evidence="1">
    <location>
        <position position="736"/>
    </location>
    <ligand>
        <name>ATP</name>
        <dbReference type="ChEBI" id="CHEBI:30616"/>
    </ligand>
</feature>
<feature type="binding site" evidence="1">
    <location>
        <begin position="807"/>
        <end position="809"/>
    </location>
    <ligand>
        <name>ATP</name>
        <dbReference type="ChEBI" id="CHEBI:30616"/>
    </ligand>
</feature>
<feature type="binding site" evidence="1">
    <location>
        <position position="856"/>
    </location>
    <ligand>
        <name>ATP</name>
        <dbReference type="ChEBI" id="CHEBI:30616"/>
    </ligand>
</feature>
<feature type="binding site" evidence="1">
    <location>
        <position position="862"/>
    </location>
    <ligand>
        <name>ATP</name>
        <dbReference type="ChEBI" id="CHEBI:30616"/>
    </ligand>
</feature>
<feature type="binding site" evidence="1">
    <location>
        <position position="881"/>
    </location>
    <ligand>
        <name>Mg(2+)</name>
        <dbReference type="ChEBI" id="CHEBI:18420"/>
    </ligand>
</feature>
<feature type="binding site" evidence="1">
    <location>
        <position position="884"/>
    </location>
    <ligand>
        <name>ATP</name>
        <dbReference type="ChEBI" id="CHEBI:30616"/>
    </ligand>
</feature>
<feature type="binding site" evidence="1">
    <location>
        <position position="947"/>
    </location>
    <ligand>
        <name>Ca(2+)</name>
        <dbReference type="ChEBI" id="CHEBI:29108"/>
        <label>2</label>
    </ligand>
</feature>
<feature type="binding site" evidence="1">
    <location>
        <position position="977"/>
    </location>
    <ligand>
        <name>Ca(2+)</name>
        <dbReference type="ChEBI" id="CHEBI:29108"/>
        <label>1</label>
    </ligand>
</feature>
<feature type="binding site" evidence="1">
    <location>
        <position position="981"/>
    </location>
    <ligand>
        <name>Ca(2+)</name>
        <dbReference type="ChEBI" id="CHEBI:29108"/>
        <label>1</label>
    </ligand>
</feature>
<feature type="binding site" evidence="1">
    <location>
        <position position="981"/>
    </location>
    <ligand>
        <name>Ca(2+)</name>
        <dbReference type="ChEBI" id="CHEBI:29108"/>
        <label>2</label>
    </ligand>
</feature>
<keyword id="KW-0067">ATP-binding</keyword>
<keyword id="KW-0106">Calcium</keyword>
<keyword id="KW-0109">Calcium transport</keyword>
<keyword id="KW-0406">Ion transport</keyword>
<keyword id="KW-0460">Magnesium</keyword>
<keyword id="KW-0472">Membrane</keyword>
<keyword id="KW-0479">Metal-binding</keyword>
<keyword id="KW-0547">Nucleotide-binding</keyword>
<keyword id="KW-0597">Phosphoprotein</keyword>
<keyword id="KW-1185">Reference proteome</keyword>
<keyword id="KW-1278">Translocase</keyword>
<keyword id="KW-0812">Transmembrane</keyword>
<keyword id="KW-1133">Transmembrane helix</keyword>
<keyword id="KW-0813">Transport</keyword>
<keyword id="KW-0926">Vacuole</keyword>
<proteinExistence type="inferred from homology"/>
<accession>Q9HDW7</accession>
<accession>Q9UTX0</accession>
<sequence>MPTYNDDDDSSRPPSVHSERNQKPSSSQFLGVPSSNYNQRENSSRSGSSTISREPSSSGTMYPMASRDSMKESYDKNKGTPPDYTSYVSHSDAEPEQASSKSSTSIEDLLHTEYDDAPFAFSIPLLQRLQDPKNTSLLHAIHGLKGLCKGLKVDPSTGISTHEPHYADKLQMSDILNDDSNPKLVVHLDRIRSQDNNPEAKVSHDSDRVKYYGKNVLPEHDSKGLIRLMLEAFKDKVLILLSIAAVVSLALGLYQTFGQPPTLDPITGKPEPRVEWVEGVAIMAAIVIVVTVGGVNDWQKELQFKKLNAKVSNFDVQVLRDGAVHSTSVFDLVVGDVLFVEAGDVVPVDGVLIESNNLVLDESAMTGETDNIKKVDANTAIERTSPDVEYRKNADPYLISGTTILEGNGKLLVTAVGVNSFNGRTTMAMRTEGQATPLQLRLSRVADAIAKLGGAASALLFIVLLIEFLVRLKSNDSSSKNKGQEFLQILIVSVTLLVVAVPEGLPLAVTLALAFATNRMQKDNNLVRHLQACETMGTATNICSDKTGTLTQNRMTVVAGGFGTDVLFFDHNDETPTNVDQGSDSSKFEDAGASAFAFKRLSPELRDLTLYSIAVNSTCRQLFEDNSDTPRFIGSKTETALLDMSVKELGLTNVDSMRSSVDIKQFFSFSSDRKASGAIFEYKDKYYFVVKGMPERVLQQSTSVITNGSLDEVEDMHSHADYFKEMITGYAKRSLRTLGLCYRVFDSWPPKDIPTNDEDSSNPLKWEDAFTDMTFLGFFGIMDPIRPDVPLAVKVCQGAGVTVRMVTGDNIVTAKAIASQCGIYTEDGISMEGPEFRSLSDEKRLEILPKLDVLARSSPLDKQLLIEGLQKLGNVVAVTGDGTNDAPALKKANVGFSMGKSGTEVAKEASDIILMDDNFSSIVKAIAWGRTVNDAVKKFLQFQITVNITAVFLTIISAVASTDQSSVLTAVQLLWVNLIMDTLAALALATDPPTPEVLKRKPEKPGASLFTFDMWKMIICQSMYQLAVTLVLHFAGNSIFHYPSNTADMNTIVFNTFVWLQLFNEINNRRLDNKLNIFERINHNFLFIAIFVIVAGIQVIIVFFGGAAFSVKRIDGKGWAISIVFGVISIPLGALIRCVPNNFLRKVLPVKTIDTVFSWILNPRFRSKRRSTDHDVESLSLIPYEPTSPNEVIDSIRHSLGFVQRIRGGRIRHLLNNSKFDKQMEALPERLRPRVKQRFMKIRSPSVSSATSVALMIPISTLVSEASGRLGGHDIWISHNRQALDKKSSNVH</sequence>